<feature type="chain" id="PRO_0000196236" description="Exotoxin PaxA">
    <location>
        <begin position="1"/>
        <end position="1049"/>
    </location>
</feature>
<feature type="transmembrane region" description="Helical" evidence="2">
    <location>
        <begin position="246"/>
        <end position="266"/>
    </location>
</feature>
<feature type="transmembrane region" description="Helical" evidence="2">
    <location>
        <begin position="311"/>
        <end position="331"/>
    </location>
</feature>
<feature type="transmembrane region" description="Helical" evidence="2">
    <location>
        <begin position="375"/>
        <end position="395"/>
    </location>
</feature>
<feature type="transmembrane region" description="Helical" evidence="2">
    <location>
        <begin position="397"/>
        <end position="417"/>
    </location>
</feature>
<feature type="repeat" description="Hemolysin-type calcium-binding 1">
    <location>
        <begin position="744"/>
        <end position="761"/>
    </location>
</feature>
<feature type="repeat" description="Hemolysin-type calcium-binding 2">
    <location>
        <begin position="762"/>
        <end position="779"/>
    </location>
</feature>
<feature type="repeat" description="Hemolysin-type calcium-binding 3">
    <location>
        <begin position="780"/>
        <end position="797"/>
    </location>
</feature>
<feature type="repeat" description="Hemolysin-type calcium-binding 4">
    <location>
        <begin position="798"/>
        <end position="815"/>
    </location>
</feature>
<feature type="repeat" description="Hemolysin-type calcium-binding 5">
    <location>
        <begin position="826"/>
        <end position="843"/>
    </location>
</feature>
<feature type="repeat" description="Hemolysin-type calcium-binding 6">
    <location>
        <begin position="844"/>
        <end position="861"/>
    </location>
</feature>
<protein>
    <recommendedName>
        <fullName>Exotoxin PaxA</fullName>
    </recommendedName>
</protein>
<dbReference type="EMBL" id="U66588">
    <property type="protein sequence ID" value="AAF15370.1"/>
    <property type="molecule type" value="Genomic_DNA"/>
</dbReference>
<dbReference type="SMR" id="Q9RCG8"/>
<dbReference type="GO" id="GO:0005576">
    <property type="term" value="C:extracellular region"/>
    <property type="evidence" value="ECO:0007669"/>
    <property type="project" value="UniProtKB-SubCell"/>
</dbReference>
<dbReference type="GO" id="GO:0020002">
    <property type="term" value="C:host cell plasma membrane"/>
    <property type="evidence" value="ECO:0007669"/>
    <property type="project" value="UniProtKB-SubCell"/>
</dbReference>
<dbReference type="GO" id="GO:0016020">
    <property type="term" value="C:membrane"/>
    <property type="evidence" value="ECO:0007669"/>
    <property type="project" value="UniProtKB-KW"/>
</dbReference>
<dbReference type="GO" id="GO:0005509">
    <property type="term" value="F:calcium ion binding"/>
    <property type="evidence" value="ECO:0007669"/>
    <property type="project" value="InterPro"/>
</dbReference>
<dbReference type="GO" id="GO:0015267">
    <property type="term" value="F:channel activity"/>
    <property type="evidence" value="ECO:0007669"/>
    <property type="project" value="InterPro"/>
</dbReference>
<dbReference type="GO" id="GO:0090729">
    <property type="term" value="F:toxin activity"/>
    <property type="evidence" value="ECO:0007669"/>
    <property type="project" value="UniProtKB-KW"/>
</dbReference>
<dbReference type="GO" id="GO:0031640">
    <property type="term" value="P:killing of cells of another organism"/>
    <property type="evidence" value="ECO:0007669"/>
    <property type="project" value="UniProtKB-KW"/>
</dbReference>
<dbReference type="Gene3D" id="2.150.10.10">
    <property type="entry name" value="Serralysin-like metalloprotease, C-terminal"/>
    <property type="match status" value="3"/>
</dbReference>
<dbReference type="InterPro" id="IPR018511">
    <property type="entry name" value="Hemolysin-typ_Ca-bd_CS"/>
</dbReference>
<dbReference type="InterPro" id="IPR001343">
    <property type="entry name" value="Hemolysn_Ca-bd"/>
</dbReference>
<dbReference type="InterPro" id="IPR013550">
    <property type="entry name" value="RTX_C"/>
</dbReference>
<dbReference type="InterPro" id="IPR018504">
    <property type="entry name" value="RTX_pore_form"/>
</dbReference>
<dbReference type="InterPro" id="IPR050557">
    <property type="entry name" value="RTX_toxin/Mannuronan_C5-epim"/>
</dbReference>
<dbReference type="InterPro" id="IPR003995">
    <property type="entry name" value="RTX_toxin_determinant-A"/>
</dbReference>
<dbReference type="InterPro" id="IPR011049">
    <property type="entry name" value="Serralysin-like_metalloprot_C"/>
</dbReference>
<dbReference type="NCBIfam" id="NF033943">
    <property type="entry name" value="RTX_toxin"/>
    <property type="match status" value="1"/>
</dbReference>
<dbReference type="PANTHER" id="PTHR38340">
    <property type="entry name" value="S-LAYER PROTEIN"/>
    <property type="match status" value="1"/>
</dbReference>
<dbReference type="PANTHER" id="PTHR38340:SF1">
    <property type="entry name" value="S-LAYER PROTEIN"/>
    <property type="match status" value="1"/>
</dbReference>
<dbReference type="Pfam" id="PF00353">
    <property type="entry name" value="HemolysinCabind"/>
    <property type="match status" value="3"/>
</dbReference>
<dbReference type="Pfam" id="PF02382">
    <property type="entry name" value="RTX"/>
    <property type="match status" value="1"/>
</dbReference>
<dbReference type="Pfam" id="PF08339">
    <property type="entry name" value="RTX_C"/>
    <property type="match status" value="1"/>
</dbReference>
<dbReference type="PRINTS" id="PR00313">
    <property type="entry name" value="CABNDNGRPT"/>
</dbReference>
<dbReference type="PRINTS" id="PR01488">
    <property type="entry name" value="RTXTOXINA"/>
</dbReference>
<dbReference type="SUPFAM" id="SSF51120">
    <property type="entry name" value="beta-Roll"/>
    <property type="match status" value="1"/>
</dbReference>
<dbReference type="PROSITE" id="PS00330">
    <property type="entry name" value="HEMOLYSIN_CALCIUM"/>
    <property type="match status" value="3"/>
</dbReference>
<keyword id="KW-0106">Calcium</keyword>
<keyword id="KW-0204">Cytolysis</keyword>
<keyword id="KW-1032">Host cell membrane</keyword>
<keyword id="KW-1043">Host membrane</keyword>
<keyword id="KW-0449">Lipoprotein</keyword>
<keyword id="KW-0472">Membrane</keyword>
<keyword id="KW-0677">Repeat</keyword>
<keyword id="KW-0964">Secreted</keyword>
<keyword id="KW-0800">Toxin</keyword>
<keyword id="KW-0812">Transmembrane</keyword>
<keyword id="KW-1133">Transmembrane helix</keyword>
<keyword id="KW-0843">Virulence</keyword>
<reference key="1">
    <citation type="journal article" date="2000" name="Infect. Immun.">
        <title>Characterization of PaxA and its operon: a cohemolytic RTX toxin determinant from pathogenic Pasteurella aerogenes.</title>
        <authorList>
            <person name="Kuhnert P."/>
            <person name="Heyberger-Meyer B."/>
            <person name="Nicolet J."/>
            <person name="Frey J."/>
        </authorList>
    </citation>
    <scope>NUCLEOTIDE SEQUENCE [GENOMIC DNA]</scope>
    <scope>FUNCTION</scope>
    <source>
        <strain>JF1319</strain>
    </source>
</reference>
<evidence type="ECO:0000250" key="1"/>
<evidence type="ECO:0000255" key="2"/>
<evidence type="ECO:0000269" key="3">
    <source>
    </source>
</evidence>
<evidence type="ECO:0000305" key="4"/>
<proteinExistence type="inferred from homology"/>
<comment type="function">
    <text evidence="3">PaxA is associated with abortion cases in swine and septicemia in young piglets. Shows cohemolytic activity with the sphingomyelinase of S.aureus but is devoid of direct hemolytic activity.</text>
</comment>
<comment type="subcellular location">
    <subcellularLocation>
        <location>Secreted</location>
    </subcellularLocation>
    <subcellularLocation>
        <location evidence="4">Host cell membrane</location>
        <topology evidence="4">Multi-pass membrane protein</topology>
    </subcellularLocation>
</comment>
<comment type="domain">
    <text evidence="1">The transmembrane domains are believed to be involved in pore formation in target cells.</text>
</comment>
<comment type="domain">
    <text evidence="1">The Gly-rich region is probably involved in calcium binding, which is required for target cell-binding and cytolytic activity.</text>
</comment>
<comment type="domain">
    <text evidence="1">The C-terminal domain contains an export signal that is recognized by the ABC transporter complex PaxBD.</text>
</comment>
<comment type="similarity">
    <text evidence="4">Belongs to the RTX prokaryotic toxin (TC 1.C.11) family.</text>
</comment>
<sequence length="1049" mass="112309">MSTWSSMLADLRKQAEIAKQQAKKGIDVTKNGLQYGVSQVKLQALAAGKSIQKYGNKLVLVIPKDYDVNTGNGFFDLAKAAEELGIQVKYIDRNDLEIAHKSLGVTDQFLGLTERGLTLFAPQLDKFLQQHSKISNVVGSSTGDTVNKLAKSQAIISGVQSVLGSVLAGINLNEAIISGGSELELAKAGVDLASELVGNIAKGTATIEAFSEQIQNFGKLVQNAKGLGGVGQQLQHISGSALSKTGLGLDIISSLLSGVTASFTLADKNASTSTKVAAGFELSNQVIGGITKAVSSYILAQRLAAGLSTTGPAAALIASSISLAISPLSFLRVADNFNRSKDIREFAERFKKLGYEGDKLLSDFYHEAGTIDASITTISTALSAIAAGTAAASAGALVGAPITLLVTGITGLISGILEFSKQPMLEHVASKLGTKIEEWERKYGKNYFENGYDARHKAFLEDSLSLLSSFNKQYETERAVLITQQRWDEYIGELAGVTGKGDKISSGKAYVDYFEEGKLLAKKPDDFNRVILDPKKGKIDISNSQTSTLLKFVTPLLTPGTESRKRTQTGKYEYVTKLDVNGINQWEVNGVKEKGAVYDFTNLIQHVHISSSVARGEEYREVRLVSRLGKGNDKVFLASGSAEIHAGDGHDVVYYDKTDTGLLMVDGTQATKQGDYTVTRELSGATQILREVVKNQKSSVGSRQETVEYRDNELAQSGNSNLKAKDNLYSVEEIIGSNHRDEFKGSKFRDIFHGADGDDLLNGNDGDDILYGDKGNDELRGDNGNDQLYGGEGNDKLFGGNGNNYLSGGDGDDELQVLGNGFNVLRGGKGNDKLYGGAGSDFLDGGEGDDYLAGGEGNDFYVYRSTSGNHTIYDQGKSSDSDTLYLSDLTFDRLLVEKVDNNLVFKPSDHNSNRGSLTIKDWFKTGHGYNHKLEQIVDKNGRKLTSDNLETHFNGTPKTNLLGYTAENQNESNLSSLKTELGKIISSAGNFGLAKQGNNNHSAALNNDVDKLISSASSFATAQMGGSGIGLLPSNNANSTILSGLARTA</sequence>
<gene>
    <name type="primary">paxA</name>
</gene>
<name>PAXA_PASAE</name>
<organism>
    <name type="scientific">Pasteurella aerogenes</name>
    <dbReference type="NCBI Taxonomy" id="749"/>
    <lineage>
        <taxon>Bacteria</taxon>
        <taxon>Pseudomonadati</taxon>
        <taxon>Pseudomonadota</taxon>
        <taxon>Gammaproteobacteria</taxon>
        <taxon>Pasteurellales</taxon>
        <taxon>Pasteurellaceae</taxon>
    </lineage>
</organism>
<accession>Q9RCG8</accession>